<gene>
    <name evidence="1" type="primary">rpmB</name>
    <name type="ordered locus">CbuG_1715</name>
</gene>
<accession>B6J213</accession>
<reference key="1">
    <citation type="journal article" date="2009" name="Infect. Immun.">
        <title>Comparative genomics reveal extensive transposon-mediated genomic plasticity and diversity among potential effector proteins within the genus Coxiella.</title>
        <authorList>
            <person name="Beare P.A."/>
            <person name="Unsworth N."/>
            <person name="Andoh M."/>
            <person name="Voth D.E."/>
            <person name="Omsland A."/>
            <person name="Gilk S.D."/>
            <person name="Williams K.P."/>
            <person name="Sobral B.W."/>
            <person name="Kupko J.J. III"/>
            <person name="Porcella S.F."/>
            <person name="Samuel J.E."/>
            <person name="Heinzen R.A."/>
        </authorList>
    </citation>
    <scope>NUCLEOTIDE SEQUENCE [LARGE SCALE GENOMIC DNA]</scope>
    <source>
        <strain>CbuG_Q212</strain>
    </source>
</reference>
<evidence type="ECO:0000255" key="1">
    <source>
        <dbReference type="HAMAP-Rule" id="MF_00373"/>
    </source>
</evidence>
<evidence type="ECO:0000256" key="2">
    <source>
        <dbReference type="SAM" id="MobiDB-lite"/>
    </source>
</evidence>
<evidence type="ECO:0000305" key="3"/>
<protein>
    <recommendedName>
        <fullName evidence="1">Large ribosomal subunit protein bL28</fullName>
    </recommendedName>
    <alternativeName>
        <fullName evidence="3">50S ribosomal protein L28</fullName>
    </alternativeName>
</protein>
<keyword id="KW-0687">Ribonucleoprotein</keyword>
<keyword id="KW-0689">Ribosomal protein</keyword>
<proteinExistence type="inferred from homology"/>
<comment type="similarity">
    <text evidence="1">Belongs to the bacterial ribosomal protein bL28 family.</text>
</comment>
<dbReference type="EMBL" id="CP001019">
    <property type="protein sequence ID" value="ACJ18991.1"/>
    <property type="molecule type" value="Genomic_DNA"/>
</dbReference>
<dbReference type="RefSeq" id="WP_005771445.1">
    <property type="nucleotide sequence ID" value="NC_011527.1"/>
</dbReference>
<dbReference type="SMR" id="B6J213"/>
<dbReference type="KEGG" id="cbg:CbuG_1715"/>
<dbReference type="HOGENOM" id="CLU_064548_3_1_6"/>
<dbReference type="GO" id="GO:0022625">
    <property type="term" value="C:cytosolic large ribosomal subunit"/>
    <property type="evidence" value="ECO:0007669"/>
    <property type="project" value="TreeGrafter"/>
</dbReference>
<dbReference type="GO" id="GO:0003735">
    <property type="term" value="F:structural constituent of ribosome"/>
    <property type="evidence" value="ECO:0007669"/>
    <property type="project" value="InterPro"/>
</dbReference>
<dbReference type="GO" id="GO:0006412">
    <property type="term" value="P:translation"/>
    <property type="evidence" value="ECO:0007669"/>
    <property type="project" value="UniProtKB-UniRule"/>
</dbReference>
<dbReference type="FunFam" id="2.30.170.40:FF:000001">
    <property type="entry name" value="50S ribosomal protein L28"/>
    <property type="match status" value="1"/>
</dbReference>
<dbReference type="Gene3D" id="2.30.170.40">
    <property type="entry name" value="Ribosomal protein L28/L24"/>
    <property type="match status" value="1"/>
</dbReference>
<dbReference type="HAMAP" id="MF_00373">
    <property type="entry name" value="Ribosomal_bL28"/>
    <property type="match status" value="1"/>
</dbReference>
<dbReference type="InterPro" id="IPR026569">
    <property type="entry name" value="Ribosomal_bL28"/>
</dbReference>
<dbReference type="InterPro" id="IPR034704">
    <property type="entry name" value="Ribosomal_bL28/bL31-like_sf"/>
</dbReference>
<dbReference type="InterPro" id="IPR001383">
    <property type="entry name" value="Ribosomal_bL28_bact-type"/>
</dbReference>
<dbReference type="InterPro" id="IPR037147">
    <property type="entry name" value="Ribosomal_bL28_sf"/>
</dbReference>
<dbReference type="NCBIfam" id="TIGR00009">
    <property type="entry name" value="L28"/>
    <property type="match status" value="1"/>
</dbReference>
<dbReference type="PANTHER" id="PTHR13528">
    <property type="entry name" value="39S RIBOSOMAL PROTEIN L28, MITOCHONDRIAL"/>
    <property type="match status" value="1"/>
</dbReference>
<dbReference type="PANTHER" id="PTHR13528:SF2">
    <property type="entry name" value="LARGE RIBOSOMAL SUBUNIT PROTEIN BL28M"/>
    <property type="match status" value="1"/>
</dbReference>
<dbReference type="Pfam" id="PF00830">
    <property type="entry name" value="Ribosomal_L28"/>
    <property type="match status" value="1"/>
</dbReference>
<dbReference type="SUPFAM" id="SSF143800">
    <property type="entry name" value="L28p-like"/>
    <property type="match status" value="1"/>
</dbReference>
<organism>
    <name type="scientific">Coxiella burnetii (strain CbuG_Q212)</name>
    <name type="common">Coxiella burnetii (strain Q212)</name>
    <dbReference type="NCBI Taxonomy" id="434923"/>
    <lineage>
        <taxon>Bacteria</taxon>
        <taxon>Pseudomonadati</taxon>
        <taxon>Pseudomonadota</taxon>
        <taxon>Gammaproteobacteria</taxon>
        <taxon>Legionellales</taxon>
        <taxon>Coxiellaceae</taxon>
        <taxon>Coxiella</taxon>
    </lineage>
</organism>
<feature type="chain" id="PRO_1000121614" description="Large ribosomal subunit protein bL28">
    <location>
        <begin position="1"/>
        <end position="79"/>
    </location>
</feature>
<feature type="region of interest" description="Disordered" evidence="2">
    <location>
        <begin position="1"/>
        <end position="26"/>
    </location>
</feature>
<feature type="compositionally biased region" description="Polar residues" evidence="2">
    <location>
        <begin position="11"/>
        <end position="20"/>
    </location>
</feature>
<sequence>MAKVCQVTGKRPQSGNNVSHANKKTNRRFLPNLKKRRFWLPDEKRFITLTVSTHGMRIIDKLGINAVLKKIREREKESK</sequence>
<name>RL28_COXB2</name>